<proteinExistence type="inferred from homology"/>
<reference key="1">
    <citation type="submission" date="2007-10" db="EMBL/GenBank/DDBJ databases">
        <title>Complete sequence of chromosome of Desulforudis audaxviator MP104C.</title>
        <authorList>
            <person name="Copeland A."/>
            <person name="Lucas S."/>
            <person name="Lapidus A."/>
            <person name="Barry K."/>
            <person name="Glavina del Rio T."/>
            <person name="Dalin E."/>
            <person name="Tice H."/>
            <person name="Bruce D."/>
            <person name="Pitluck S."/>
            <person name="Lowry S.R."/>
            <person name="Larimer F."/>
            <person name="Land M.L."/>
            <person name="Hauser L."/>
            <person name="Kyrpides N."/>
            <person name="Ivanova N.N."/>
            <person name="Richardson P."/>
        </authorList>
    </citation>
    <scope>NUCLEOTIDE SEQUENCE [LARGE SCALE GENOMIC DNA]</scope>
    <source>
        <strain>MP104C</strain>
    </source>
</reference>
<dbReference type="EC" id="2.4.2.18" evidence="1"/>
<dbReference type="EMBL" id="CP000860">
    <property type="protein sequence ID" value="ACA59700.1"/>
    <property type="molecule type" value="Genomic_DNA"/>
</dbReference>
<dbReference type="RefSeq" id="WP_012302286.1">
    <property type="nucleotide sequence ID" value="NC_010424.1"/>
</dbReference>
<dbReference type="SMR" id="B1I3Z8"/>
<dbReference type="STRING" id="477974.Daud_1189"/>
<dbReference type="KEGG" id="dau:Daud_1189"/>
<dbReference type="eggNOG" id="COG0547">
    <property type="taxonomic scope" value="Bacteria"/>
</dbReference>
<dbReference type="HOGENOM" id="CLU_034315_2_1_9"/>
<dbReference type="OrthoDB" id="9806430at2"/>
<dbReference type="UniPathway" id="UPA00035">
    <property type="reaction ID" value="UER00041"/>
</dbReference>
<dbReference type="Proteomes" id="UP000008544">
    <property type="component" value="Chromosome"/>
</dbReference>
<dbReference type="GO" id="GO:0005829">
    <property type="term" value="C:cytosol"/>
    <property type="evidence" value="ECO:0007669"/>
    <property type="project" value="TreeGrafter"/>
</dbReference>
<dbReference type="GO" id="GO:0004048">
    <property type="term" value="F:anthranilate phosphoribosyltransferase activity"/>
    <property type="evidence" value="ECO:0007669"/>
    <property type="project" value="UniProtKB-UniRule"/>
</dbReference>
<dbReference type="GO" id="GO:0000287">
    <property type="term" value="F:magnesium ion binding"/>
    <property type="evidence" value="ECO:0007669"/>
    <property type="project" value="UniProtKB-UniRule"/>
</dbReference>
<dbReference type="GO" id="GO:0000162">
    <property type="term" value="P:L-tryptophan biosynthetic process"/>
    <property type="evidence" value="ECO:0007669"/>
    <property type="project" value="UniProtKB-UniRule"/>
</dbReference>
<dbReference type="FunFam" id="3.40.1030.10:FF:000002">
    <property type="entry name" value="Anthranilate phosphoribosyltransferase"/>
    <property type="match status" value="1"/>
</dbReference>
<dbReference type="Gene3D" id="3.40.1030.10">
    <property type="entry name" value="Nucleoside phosphorylase/phosphoribosyltransferase catalytic domain"/>
    <property type="match status" value="1"/>
</dbReference>
<dbReference type="Gene3D" id="1.20.970.10">
    <property type="entry name" value="Transferase, Pyrimidine Nucleoside Phosphorylase, Chain C"/>
    <property type="match status" value="1"/>
</dbReference>
<dbReference type="HAMAP" id="MF_00211">
    <property type="entry name" value="TrpD"/>
    <property type="match status" value="1"/>
</dbReference>
<dbReference type="InterPro" id="IPR005940">
    <property type="entry name" value="Anthranilate_Pribosyl_Tfrase"/>
</dbReference>
<dbReference type="InterPro" id="IPR000312">
    <property type="entry name" value="Glycosyl_Trfase_fam3"/>
</dbReference>
<dbReference type="InterPro" id="IPR017459">
    <property type="entry name" value="Glycosyl_Trfase_fam3_N_dom"/>
</dbReference>
<dbReference type="InterPro" id="IPR036320">
    <property type="entry name" value="Glycosyl_Trfase_fam3_N_dom_sf"/>
</dbReference>
<dbReference type="InterPro" id="IPR035902">
    <property type="entry name" value="Nuc_phospho_transferase"/>
</dbReference>
<dbReference type="NCBIfam" id="TIGR01245">
    <property type="entry name" value="trpD"/>
    <property type="match status" value="1"/>
</dbReference>
<dbReference type="PANTHER" id="PTHR43285">
    <property type="entry name" value="ANTHRANILATE PHOSPHORIBOSYLTRANSFERASE"/>
    <property type="match status" value="1"/>
</dbReference>
<dbReference type="PANTHER" id="PTHR43285:SF2">
    <property type="entry name" value="ANTHRANILATE PHOSPHORIBOSYLTRANSFERASE"/>
    <property type="match status" value="1"/>
</dbReference>
<dbReference type="Pfam" id="PF02885">
    <property type="entry name" value="Glycos_trans_3N"/>
    <property type="match status" value="1"/>
</dbReference>
<dbReference type="Pfam" id="PF00591">
    <property type="entry name" value="Glycos_transf_3"/>
    <property type="match status" value="1"/>
</dbReference>
<dbReference type="SUPFAM" id="SSF52418">
    <property type="entry name" value="Nucleoside phosphorylase/phosphoribosyltransferase catalytic domain"/>
    <property type="match status" value="1"/>
</dbReference>
<dbReference type="SUPFAM" id="SSF47648">
    <property type="entry name" value="Nucleoside phosphorylase/phosphoribosyltransferase N-terminal domain"/>
    <property type="match status" value="1"/>
</dbReference>
<gene>
    <name evidence="1" type="primary">trpD</name>
    <name type="ordered locus">Daud_1189</name>
</gene>
<comment type="function">
    <text evidence="1">Catalyzes the transfer of the phosphoribosyl group of 5-phosphorylribose-1-pyrophosphate (PRPP) to anthranilate to yield N-(5'-phosphoribosyl)-anthranilate (PRA).</text>
</comment>
<comment type="catalytic activity">
    <reaction evidence="1">
        <text>N-(5-phospho-beta-D-ribosyl)anthranilate + diphosphate = 5-phospho-alpha-D-ribose 1-diphosphate + anthranilate</text>
        <dbReference type="Rhea" id="RHEA:11768"/>
        <dbReference type="ChEBI" id="CHEBI:16567"/>
        <dbReference type="ChEBI" id="CHEBI:18277"/>
        <dbReference type="ChEBI" id="CHEBI:33019"/>
        <dbReference type="ChEBI" id="CHEBI:58017"/>
        <dbReference type="EC" id="2.4.2.18"/>
    </reaction>
</comment>
<comment type="cofactor">
    <cofactor evidence="1">
        <name>Mg(2+)</name>
        <dbReference type="ChEBI" id="CHEBI:18420"/>
    </cofactor>
    <text evidence="1">Binds 2 magnesium ions per monomer.</text>
</comment>
<comment type="pathway">
    <text evidence="1">Amino-acid biosynthesis; L-tryptophan biosynthesis; L-tryptophan from chorismate: step 2/5.</text>
</comment>
<comment type="subunit">
    <text evidence="1">Homodimer.</text>
</comment>
<comment type="similarity">
    <text evidence="1">Belongs to the anthranilate phosphoribosyltransferase family.</text>
</comment>
<sequence>MIREALQKLVGGEDLEQHEAEAVMAEIMDGEATSAQIGALLAGLRLKKETAAEIRGFARAMRARAEQVPTRHELVADTCGTGGDGAQTFNISTTAAFVVAGAGVPVAKHGNTAVSSRCGSADVLRHLGVNLDLTPAQMGACLDEVGIAFLFAPRLHRAMQHAAGPRKELGIRTVFNILGPLTNPVRPRVQVLGVFDAAVAELVADALAGLEVERAFVIHGAGRLDEVSLAGPAQVWEVRPGSVRAGILDPVDLGFERADVESLSGGSPADNARITLEILHGASGPRRDAVLLNAGLALLAAGRAGDAAGAVRLAAESLDSGAARERLTRLIEFTERCKHVEHDNRL</sequence>
<keyword id="KW-0028">Amino-acid biosynthesis</keyword>
<keyword id="KW-0057">Aromatic amino acid biosynthesis</keyword>
<keyword id="KW-0328">Glycosyltransferase</keyword>
<keyword id="KW-0460">Magnesium</keyword>
<keyword id="KW-0479">Metal-binding</keyword>
<keyword id="KW-1185">Reference proteome</keyword>
<keyword id="KW-0808">Transferase</keyword>
<keyword id="KW-0822">Tryptophan biosynthesis</keyword>
<name>TRPD_DESAP</name>
<protein>
    <recommendedName>
        <fullName evidence="1">Anthranilate phosphoribosyltransferase</fullName>
        <ecNumber evidence="1">2.4.2.18</ecNumber>
    </recommendedName>
</protein>
<organism>
    <name type="scientific">Desulforudis audaxviator (strain MP104C)</name>
    <dbReference type="NCBI Taxonomy" id="477974"/>
    <lineage>
        <taxon>Bacteria</taxon>
        <taxon>Bacillati</taxon>
        <taxon>Bacillota</taxon>
        <taxon>Clostridia</taxon>
        <taxon>Thermoanaerobacterales</taxon>
        <taxon>Candidatus Desulforudaceae</taxon>
        <taxon>Candidatus Desulforudis</taxon>
    </lineage>
</organism>
<evidence type="ECO:0000255" key="1">
    <source>
        <dbReference type="HAMAP-Rule" id="MF_00211"/>
    </source>
</evidence>
<accession>B1I3Z8</accession>
<feature type="chain" id="PRO_1000099798" description="Anthranilate phosphoribosyltransferase">
    <location>
        <begin position="1"/>
        <end position="346"/>
    </location>
</feature>
<feature type="binding site" evidence="1">
    <location>
        <position position="80"/>
    </location>
    <ligand>
        <name>5-phospho-alpha-D-ribose 1-diphosphate</name>
        <dbReference type="ChEBI" id="CHEBI:58017"/>
    </ligand>
</feature>
<feature type="binding site" evidence="1">
    <location>
        <position position="80"/>
    </location>
    <ligand>
        <name>anthranilate</name>
        <dbReference type="ChEBI" id="CHEBI:16567"/>
        <label>1</label>
    </ligand>
</feature>
<feature type="binding site" evidence="1">
    <location>
        <begin position="83"/>
        <end position="84"/>
    </location>
    <ligand>
        <name>5-phospho-alpha-D-ribose 1-diphosphate</name>
        <dbReference type="ChEBI" id="CHEBI:58017"/>
    </ligand>
</feature>
<feature type="binding site" evidence="1">
    <location>
        <position position="88"/>
    </location>
    <ligand>
        <name>5-phospho-alpha-D-ribose 1-diphosphate</name>
        <dbReference type="ChEBI" id="CHEBI:58017"/>
    </ligand>
</feature>
<feature type="binding site" evidence="1">
    <location>
        <begin position="90"/>
        <end position="93"/>
    </location>
    <ligand>
        <name>5-phospho-alpha-D-ribose 1-diphosphate</name>
        <dbReference type="ChEBI" id="CHEBI:58017"/>
    </ligand>
</feature>
<feature type="binding site" evidence="1">
    <location>
        <position position="92"/>
    </location>
    <ligand>
        <name>Mg(2+)</name>
        <dbReference type="ChEBI" id="CHEBI:18420"/>
        <label>1</label>
    </ligand>
</feature>
<feature type="binding site" evidence="1">
    <location>
        <begin position="108"/>
        <end position="116"/>
    </location>
    <ligand>
        <name>5-phospho-alpha-D-ribose 1-diphosphate</name>
        <dbReference type="ChEBI" id="CHEBI:58017"/>
    </ligand>
</feature>
<feature type="binding site" evidence="1">
    <location>
        <position position="111"/>
    </location>
    <ligand>
        <name>anthranilate</name>
        <dbReference type="ChEBI" id="CHEBI:16567"/>
        <label>1</label>
    </ligand>
</feature>
<feature type="binding site" evidence="1">
    <location>
        <position position="120"/>
    </location>
    <ligand>
        <name>5-phospho-alpha-D-ribose 1-diphosphate</name>
        <dbReference type="ChEBI" id="CHEBI:58017"/>
    </ligand>
</feature>
<feature type="binding site" evidence="1">
    <location>
        <position position="166"/>
    </location>
    <ligand>
        <name>anthranilate</name>
        <dbReference type="ChEBI" id="CHEBI:16567"/>
        <label>2</label>
    </ligand>
</feature>
<feature type="binding site" evidence="1">
    <location>
        <position position="225"/>
    </location>
    <ligand>
        <name>Mg(2+)</name>
        <dbReference type="ChEBI" id="CHEBI:18420"/>
        <label>2</label>
    </ligand>
</feature>
<feature type="binding site" evidence="1">
    <location>
        <position position="226"/>
    </location>
    <ligand>
        <name>Mg(2+)</name>
        <dbReference type="ChEBI" id="CHEBI:18420"/>
        <label>1</label>
    </ligand>
</feature>
<feature type="binding site" evidence="1">
    <location>
        <position position="226"/>
    </location>
    <ligand>
        <name>Mg(2+)</name>
        <dbReference type="ChEBI" id="CHEBI:18420"/>
        <label>2</label>
    </ligand>
</feature>